<comment type="function">
    <text evidence="1">Part of the Tol-Pal system, which plays a role in outer membrane invagination during cell division and is important for maintaining outer membrane integrity. TolB occupies a key intermediary position in the Tol-Pal system because it communicates directly with both membrane-embedded components, Pal in the outer membrane and TolA in the inner membrane.</text>
</comment>
<comment type="subunit">
    <text evidence="1">The Tol-Pal system is composed of five core proteins: the inner membrane proteins TolA, TolQ and TolR, the periplasmic protein TolB and the outer membrane protein Pal. They form a network linking the inner and outer membranes and the peptidoglycan layer.</text>
</comment>
<comment type="subcellular location">
    <subcellularLocation>
        <location evidence="1">Periplasm</location>
    </subcellularLocation>
</comment>
<comment type="similarity">
    <text evidence="1">Belongs to the TolB family.</text>
</comment>
<organism>
    <name type="scientific">Escherichia coli O8 (strain IAI1)</name>
    <dbReference type="NCBI Taxonomy" id="585034"/>
    <lineage>
        <taxon>Bacteria</taxon>
        <taxon>Pseudomonadati</taxon>
        <taxon>Pseudomonadota</taxon>
        <taxon>Gammaproteobacteria</taxon>
        <taxon>Enterobacterales</taxon>
        <taxon>Enterobacteriaceae</taxon>
        <taxon>Escherichia</taxon>
    </lineage>
</organism>
<sequence>MKQALRVAFGFLILWASVLHAEVRIVIDSGVDSGRPIGVVPFQWVGPGAAPEDIGGIVAADLRNSGKFNPLDRARLPQQPGSAQEVQPAAWSALGIDAVVVGQVTPNPDGSYNVAYQLVDTGGAPGTVLAQNSYKVNKQWLRYAGHTASDEVFEKLTGIKGAFRTRIAYVVQTNGGQFPYELRVSDYDGYNQFVVHRSPQPLMSPAWSPDGSKLAYVTFESGRSALVIQTLANGAVRQVASFPRHNGAPAFSPDGSKLAFALSKTGSLNLYVMDLASGQIRQVTDGRSNNTEPTWFPDSQNLAFTSDQAGRPQVYKVNINGGAPQRITWEGSQNQDADVSSDGKFMVMVSSNGGQQHIAKQDLATGGVQVLSSTFLDETPSLAPNGTMVIYSSSQGMGSVLNLVSTDGRFKARLPATDGQVKFPAWSPYL</sequence>
<keyword id="KW-0131">Cell cycle</keyword>
<keyword id="KW-0132">Cell division</keyword>
<keyword id="KW-0574">Periplasm</keyword>
<keyword id="KW-0732">Signal</keyword>
<dbReference type="EMBL" id="CU928160">
    <property type="protein sequence ID" value="CAQ97582.1"/>
    <property type="molecule type" value="Genomic_DNA"/>
</dbReference>
<dbReference type="RefSeq" id="WP_015953116.1">
    <property type="nucleotide sequence ID" value="NC_011741.1"/>
</dbReference>
<dbReference type="SMR" id="B7M6B0"/>
<dbReference type="KEGG" id="ecr:ECIAI1_0715"/>
<dbReference type="HOGENOM" id="CLU_047123_0_0_6"/>
<dbReference type="GO" id="GO:0042597">
    <property type="term" value="C:periplasmic space"/>
    <property type="evidence" value="ECO:0007669"/>
    <property type="project" value="UniProtKB-SubCell"/>
</dbReference>
<dbReference type="GO" id="GO:0051301">
    <property type="term" value="P:cell division"/>
    <property type="evidence" value="ECO:0007669"/>
    <property type="project" value="UniProtKB-UniRule"/>
</dbReference>
<dbReference type="GO" id="GO:0017038">
    <property type="term" value="P:protein import"/>
    <property type="evidence" value="ECO:0007669"/>
    <property type="project" value="InterPro"/>
</dbReference>
<dbReference type="FunFam" id="2.120.10.30:FF:000022">
    <property type="entry name" value="Tol-Pal system protein TolB"/>
    <property type="match status" value="1"/>
</dbReference>
<dbReference type="FunFam" id="3.40.50.10070:FF:000001">
    <property type="entry name" value="Tol-Pal system protein TolB"/>
    <property type="match status" value="1"/>
</dbReference>
<dbReference type="Gene3D" id="2.120.10.30">
    <property type="entry name" value="TolB, C-terminal domain"/>
    <property type="match status" value="1"/>
</dbReference>
<dbReference type="Gene3D" id="3.40.50.10070">
    <property type="entry name" value="TolB, N-terminal domain"/>
    <property type="match status" value="1"/>
</dbReference>
<dbReference type="HAMAP" id="MF_00671">
    <property type="entry name" value="TolB"/>
    <property type="match status" value="1"/>
</dbReference>
<dbReference type="InterPro" id="IPR011042">
    <property type="entry name" value="6-blade_b-propeller_TolB-like"/>
</dbReference>
<dbReference type="InterPro" id="IPR011659">
    <property type="entry name" value="PD40"/>
</dbReference>
<dbReference type="InterPro" id="IPR014167">
    <property type="entry name" value="Tol-Pal_TolB"/>
</dbReference>
<dbReference type="InterPro" id="IPR007195">
    <property type="entry name" value="TolB_N"/>
</dbReference>
<dbReference type="NCBIfam" id="TIGR02800">
    <property type="entry name" value="propeller_TolB"/>
    <property type="match status" value="1"/>
</dbReference>
<dbReference type="PANTHER" id="PTHR36842:SF1">
    <property type="entry name" value="PROTEIN TOLB"/>
    <property type="match status" value="1"/>
</dbReference>
<dbReference type="PANTHER" id="PTHR36842">
    <property type="entry name" value="PROTEIN TOLB HOMOLOG"/>
    <property type="match status" value="1"/>
</dbReference>
<dbReference type="Pfam" id="PF07676">
    <property type="entry name" value="PD40"/>
    <property type="match status" value="4"/>
</dbReference>
<dbReference type="Pfam" id="PF04052">
    <property type="entry name" value="TolB_N"/>
    <property type="match status" value="1"/>
</dbReference>
<dbReference type="SUPFAM" id="SSF52964">
    <property type="entry name" value="TolB, N-terminal domain"/>
    <property type="match status" value="1"/>
</dbReference>
<dbReference type="SUPFAM" id="SSF69304">
    <property type="entry name" value="Tricorn protease N-terminal domain"/>
    <property type="match status" value="1"/>
</dbReference>
<gene>
    <name evidence="1" type="primary">tolB</name>
    <name type="ordered locus">ECIAI1_0715</name>
</gene>
<protein>
    <recommendedName>
        <fullName evidence="1">Tol-Pal system protein TolB</fullName>
    </recommendedName>
</protein>
<evidence type="ECO:0000255" key="1">
    <source>
        <dbReference type="HAMAP-Rule" id="MF_00671"/>
    </source>
</evidence>
<accession>B7M6B0</accession>
<feature type="signal peptide" evidence="1">
    <location>
        <begin position="1"/>
        <end position="21"/>
    </location>
</feature>
<feature type="chain" id="PRO_1000131525" description="Tol-Pal system protein TolB" evidence="1">
    <location>
        <begin position="22"/>
        <end position="430"/>
    </location>
</feature>
<name>TOLB_ECO8A</name>
<reference key="1">
    <citation type="journal article" date="2009" name="PLoS Genet.">
        <title>Organised genome dynamics in the Escherichia coli species results in highly diverse adaptive paths.</title>
        <authorList>
            <person name="Touchon M."/>
            <person name="Hoede C."/>
            <person name="Tenaillon O."/>
            <person name="Barbe V."/>
            <person name="Baeriswyl S."/>
            <person name="Bidet P."/>
            <person name="Bingen E."/>
            <person name="Bonacorsi S."/>
            <person name="Bouchier C."/>
            <person name="Bouvet O."/>
            <person name="Calteau A."/>
            <person name="Chiapello H."/>
            <person name="Clermont O."/>
            <person name="Cruveiller S."/>
            <person name="Danchin A."/>
            <person name="Diard M."/>
            <person name="Dossat C."/>
            <person name="Karoui M.E."/>
            <person name="Frapy E."/>
            <person name="Garry L."/>
            <person name="Ghigo J.M."/>
            <person name="Gilles A.M."/>
            <person name="Johnson J."/>
            <person name="Le Bouguenec C."/>
            <person name="Lescat M."/>
            <person name="Mangenot S."/>
            <person name="Martinez-Jehanne V."/>
            <person name="Matic I."/>
            <person name="Nassif X."/>
            <person name="Oztas S."/>
            <person name="Petit M.A."/>
            <person name="Pichon C."/>
            <person name="Rouy Z."/>
            <person name="Ruf C.S."/>
            <person name="Schneider D."/>
            <person name="Tourret J."/>
            <person name="Vacherie B."/>
            <person name="Vallenet D."/>
            <person name="Medigue C."/>
            <person name="Rocha E.P.C."/>
            <person name="Denamur E."/>
        </authorList>
    </citation>
    <scope>NUCLEOTIDE SEQUENCE [LARGE SCALE GENOMIC DNA]</scope>
    <source>
        <strain>IAI1</strain>
    </source>
</reference>
<proteinExistence type="inferred from homology"/>